<gene>
    <name type="primary">ARF6</name>
    <name type="synonym">ARF6A</name>
    <name type="ordered locus">Os02g0164900</name>
    <name type="ordered locus">LOC_Os02g06910</name>
    <name type="ORF">OJ1661_C12.26</name>
    <name type="ORF">OsJ_005343</name>
    <name type="ORF">OSJNBa0023I17.9</name>
</gene>
<name>ARFF_ORYSJ</name>
<protein>
    <recommendedName>
        <fullName>Auxin response factor 6</fullName>
    </recommendedName>
    <alternativeName>
        <fullName>OsARF6a</fullName>
    </alternativeName>
</protein>
<proteinExistence type="evidence at protein level"/>
<feature type="chain" id="PRO_0000299260" description="Auxin response factor 6">
    <location>
        <begin position="1"/>
        <end position="908"/>
    </location>
</feature>
<feature type="domain" description="PB1" evidence="3">
    <location>
        <begin position="777"/>
        <end position="861"/>
    </location>
</feature>
<feature type="DNA-binding region" description="TF-B3" evidence="2">
    <location>
        <begin position="134"/>
        <end position="236"/>
    </location>
</feature>
<feature type="region of interest" description="Disordered" evidence="4">
    <location>
        <begin position="1"/>
        <end position="21"/>
    </location>
</feature>
<feature type="region of interest" description="Disordered" evidence="4">
    <location>
        <begin position="525"/>
        <end position="556"/>
    </location>
</feature>
<feature type="compositionally biased region" description="Low complexity" evidence="4">
    <location>
        <begin position="526"/>
        <end position="556"/>
    </location>
</feature>
<reference key="1">
    <citation type="journal article" date="2005" name="Nature">
        <title>The map-based sequence of the rice genome.</title>
        <authorList>
            <consortium name="International rice genome sequencing project (IRGSP)"/>
        </authorList>
    </citation>
    <scope>NUCLEOTIDE SEQUENCE [LARGE SCALE GENOMIC DNA]</scope>
    <source>
        <strain>cv. Nipponbare</strain>
    </source>
</reference>
<reference key="2">
    <citation type="journal article" date="2008" name="Nucleic Acids Res.">
        <title>The rice annotation project database (RAP-DB): 2008 update.</title>
        <authorList>
            <consortium name="The rice annotation project (RAP)"/>
        </authorList>
    </citation>
    <scope>GENOME REANNOTATION</scope>
    <source>
        <strain>cv. Nipponbare</strain>
    </source>
</reference>
<reference key="3">
    <citation type="journal article" date="2013" name="Rice">
        <title>Improvement of the Oryza sativa Nipponbare reference genome using next generation sequence and optical map data.</title>
        <authorList>
            <person name="Kawahara Y."/>
            <person name="de la Bastide M."/>
            <person name="Hamilton J.P."/>
            <person name="Kanamori H."/>
            <person name="McCombie W.R."/>
            <person name="Ouyang S."/>
            <person name="Schwartz D.C."/>
            <person name="Tanaka T."/>
            <person name="Wu J."/>
            <person name="Zhou S."/>
            <person name="Childs K.L."/>
            <person name="Davidson R.M."/>
            <person name="Lin H."/>
            <person name="Quesada-Ocampo L."/>
            <person name="Vaillancourt B."/>
            <person name="Sakai H."/>
            <person name="Lee S.S."/>
            <person name="Kim J."/>
            <person name="Numa H."/>
            <person name="Itoh T."/>
            <person name="Buell C.R."/>
            <person name="Matsumoto T."/>
        </authorList>
    </citation>
    <scope>GENOME REANNOTATION</scope>
    <source>
        <strain>cv. Nipponbare</strain>
    </source>
</reference>
<reference key="4">
    <citation type="journal article" date="2005" name="PLoS Biol.">
        <title>The genomes of Oryza sativa: a history of duplications.</title>
        <authorList>
            <person name="Yu J."/>
            <person name="Wang J."/>
            <person name="Lin W."/>
            <person name="Li S."/>
            <person name="Li H."/>
            <person name="Zhou J."/>
            <person name="Ni P."/>
            <person name="Dong W."/>
            <person name="Hu S."/>
            <person name="Zeng C."/>
            <person name="Zhang J."/>
            <person name="Zhang Y."/>
            <person name="Li R."/>
            <person name="Xu Z."/>
            <person name="Li S."/>
            <person name="Li X."/>
            <person name="Zheng H."/>
            <person name="Cong L."/>
            <person name="Lin L."/>
            <person name="Yin J."/>
            <person name="Geng J."/>
            <person name="Li G."/>
            <person name="Shi J."/>
            <person name="Liu J."/>
            <person name="Lv H."/>
            <person name="Li J."/>
            <person name="Wang J."/>
            <person name="Deng Y."/>
            <person name="Ran L."/>
            <person name="Shi X."/>
            <person name="Wang X."/>
            <person name="Wu Q."/>
            <person name="Li C."/>
            <person name="Ren X."/>
            <person name="Wang J."/>
            <person name="Wang X."/>
            <person name="Li D."/>
            <person name="Liu D."/>
            <person name="Zhang X."/>
            <person name="Ji Z."/>
            <person name="Zhao W."/>
            <person name="Sun Y."/>
            <person name="Zhang Z."/>
            <person name="Bao J."/>
            <person name="Han Y."/>
            <person name="Dong L."/>
            <person name="Ji J."/>
            <person name="Chen P."/>
            <person name="Wu S."/>
            <person name="Liu J."/>
            <person name="Xiao Y."/>
            <person name="Bu D."/>
            <person name="Tan J."/>
            <person name="Yang L."/>
            <person name="Ye C."/>
            <person name="Zhang J."/>
            <person name="Xu J."/>
            <person name="Zhou Y."/>
            <person name="Yu Y."/>
            <person name="Zhang B."/>
            <person name="Zhuang S."/>
            <person name="Wei H."/>
            <person name="Liu B."/>
            <person name="Lei M."/>
            <person name="Yu H."/>
            <person name="Li Y."/>
            <person name="Xu H."/>
            <person name="Wei S."/>
            <person name="He X."/>
            <person name="Fang L."/>
            <person name="Zhang Z."/>
            <person name="Zhang Y."/>
            <person name="Huang X."/>
            <person name="Su Z."/>
            <person name="Tong W."/>
            <person name="Li J."/>
            <person name="Tong Z."/>
            <person name="Li S."/>
            <person name="Ye J."/>
            <person name="Wang L."/>
            <person name="Fang L."/>
            <person name="Lei T."/>
            <person name="Chen C.-S."/>
            <person name="Chen H.-C."/>
            <person name="Xu Z."/>
            <person name="Li H."/>
            <person name="Huang H."/>
            <person name="Zhang F."/>
            <person name="Xu H."/>
            <person name="Li N."/>
            <person name="Zhao C."/>
            <person name="Li S."/>
            <person name="Dong L."/>
            <person name="Huang Y."/>
            <person name="Li L."/>
            <person name="Xi Y."/>
            <person name="Qi Q."/>
            <person name="Li W."/>
            <person name="Zhang B."/>
            <person name="Hu W."/>
            <person name="Zhang Y."/>
            <person name="Tian X."/>
            <person name="Jiao Y."/>
            <person name="Liang X."/>
            <person name="Jin J."/>
            <person name="Gao L."/>
            <person name="Zheng W."/>
            <person name="Hao B."/>
            <person name="Liu S.-M."/>
            <person name="Wang W."/>
            <person name="Yuan L."/>
            <person name="Cao M."/>
            <person name="McDermott J."/>
            <person name="Samudrala R."/>
            <person name="Wang J."/>
            <person name="Wong G.K.-S."/>
            <person name="Yang H."/>
        </authorList>
    </citation>
    <scope>NUCLEOTIDE SEQUENCE [LARGE SCALE GENOMIC DNA]</scope>
    <source>
        <strain>cv. Nipponbare</strain>
    </source>
</reference>
<reference key="5">
    <citation type="journal article" date="2003" name="Science">
        <title>Collection, mapping, and annotation of over 28,000 cDNA clones from japonica rice.</title>
        <authorList>
            <consortium name="The rice full-length cDNA consortium"/>
        </authorList>
    </citation>
    <scope>NUCLEOTIDE SEQUENCE [LARGE SCALE MRNA]</scope>
    <source>
        <strain>cv. Nipponbare</strain>
    </source>
</reference>
<reference key="6">
    <citation type="journal article" date="2001" name="Genes Genet. Syst.">
        <title>Auxin response factor family in rice.</title>
        <authorList>
            <person name="Sato Y."/>
            <person name="Nishimura A."/>
            <person name="Ito M."/>
            <person name="Ashikari M."/>
            <person name="Hirano H.-Y."/>
            <person name="Matsuoka M."/>
        </authorList>
    </citation>
    <scope>NUCLEOTIDE SEQUENCE [MRNA] OF 22-417</scope>
    <source>
        <strain>cv. Nipponbare</strain>
    </source>
</reference>
<reference key="7">
    <citation type="journal article" date="2006" name="Proteomics">
        <title>Proteomic analysis of rice leaf, stem and root tissues during growth course.</title>
        <authorList>
            <person name="Nozu Y."/>
            <person name="Tsugita A."/>
            <person name="Kamijo K."/>
        </authorList>
    </citation>
    <scope>PROTEIN SEQUENCE [LARGE SCALE ANALYSIS] OF 94-100</scope>
    <scope>IDENTIFICATION BY MASS SPECTROMETRY</scope>
    <source>
        <strain>cv. Nipponbare</strain>
    </source>
</reference>
<reference key="8">
    <citation type="journal article" date="2007" name="Gene">
        <title>Genome-wide analysis of the auxin response factors (ARF) gene family in rice (Oryza sativa).</title>
        <authorList>
            <person name="Wang D."/>
            <person name="Pei K."/>
            <person name="Fu Y."/>
            <person name="Sun Z."/>
            <person name="Li S."/>
            <person name="Liu H."/>
            <person name="Tang K."/>
            <person name="Han B."/>
            <person name="Tao Y."/>
        </authorList>
    </citation>
    <scope>GENE FAMILY</scope>
    <scope>TISSUE SPECIFICITY</scope>
    <scope>NOMENCLATURE</scope>
</reference>
<accession>Q6H6V4</accession>
<accession>A0A0P0VF46</accession>
<accession>B7EI38</accession>
<accession>Q8S981</accession>
<evidence type="ECO:0000250" key="1"/>
<evidence type="ECO:0000255" key="2">
    <source>
        <dbReference type="PROSITE-ProRule" id="PRU00326"/>
    </source>
</evidence>
<evidence type="ECO:0000255" key="3">
    <source>
        <dbReference type="PROSITE-ProRule" id="PRU01081"/>
    </source>
</evidence>
<evidence type="ECO:0000256" key="4">
    <source>
        <dbReference type="SAM" id="MobiDB-lite"/>
    </source>
</evidence>
<evidence type="ECO:0000269" key="5">
    <source>
    </source>
</evidence>
<evidence type="ECO:0000305" key="6"/>
<comment type="function">
    <text>Auxin response factors (ARFs) are transcriptional factors that bind specifically to the DNA sequence 5'-TGTCTC-3' found in the auxin-responsive promoter elements (AuxREs).</text>
</comment>
<comment type="subunit">
    <text evidence="1">Homodimers and heterodimers.</text>
</comment>
<comment type="subcellular location">
    <subcellularLocation>
        <location evidence="2">Nucleus</location>
    </subcellularLocation>
</comment>
<comment type="tissue specificity">
    <text evidence="5">Expressed in roots, culms, leaves and young panicles.</text>
</comment>
<comment type="domain">
    <text>Interactions between auxin response factors (ARFs) and Aux/IAA proteins occur through their C-terminal dimerization domains III and IV.</text>
</comment>
<comment type="similarity">
    <text evidence="6">Belongs to the ARF family.</text>
</comment>
<sequence length="908" mass="100847">MKLSPSAGGVSDQPPSPPEVAEEQKCLNSELWHACAGPLVSLPAVGSRVVYFPQGHSEQVAASTNKEMESQIPNYPNLPPQLICQLHNVTMHADAETDEVYAQMTLQPLSPQELKDPFLPAELGTASKQPTNYFCKTLTASDTSTHGGFSVPRRAAEKVFPPLDFTQQPPAQELMAKDLHGNEWKFRHIFRGQPKRHLLTTGWSVFVSAKRLVAGDSVLFIWNDSNQLLLGIRRANRPQTVMPSSVLSSDSMHIGLLAAAAHAASTNSRFTIFYNPRASPSEFVIPLAKYVKAVYHTRISVGMRFRMLFETEESSVRRYMGTITGISDLDPVRWMNSHWRSVKVGWDESTAGERQPRVSLWEIEPLTTFPMYPSPFPLRLKRPWPTGLPSLYGGKEDDLASSLMWLRDSQNTGFQSLNFGGLGMSPWMQPRLDSSLLGLQPDMYQTIAAAAALQNTTKQVSPAMLQFQQPQNIVGRSSLLSSQILQQAQPQFQQMYHQNINGNSIQGHSQPEYLQQPLQHCQSFNEQKPQLQPQQQQQESHQQQPQHQQMQQQKHLSNFQTVPNALSVFSQLSSTPQSTPSTLQTVSPFSQQHNFPDTNISCLSPSNVSSMHDTLRSFPSEAASDLPGVPRITPVPVSDPWSSKRVAVESTITSRPHDISSQIENFDLTPSSIPQNSTLAPLPGRECLVDQDGSSDPQNHFLFGVNIDSQSLLMQDGIPSLHNENSSSTIPYSTSNFLSPSQDDYPLSQTLTTPGCLDESGYVPCSDNADQVKRPHATFVKVYKSGTVGRLLDITRFSSYHELRSEVGRLFGLEGQLEDPLRSGWQLVFVDREDDVLLVGDDPWQEFVNSVSCIKILSPQEVQQMGKPGIELFSTSARRLGNSCDNYMSRQESRSLSTGIASVGSVEF</sequence>
<organism>
    <name type="scientific">Oryza sativa subsp. japonica</name>
    <name type="common">Rice</name>
    <dbReference type="NCBI Taxonomy" id="39947"/>
    <lineage>
        <taxon>Eukaryota</taxon>
        <taxon>Viridiplantae</taxon>
        <taxon>Streptophyta</taxon>
        <taxon>Embryophyta</taxon>
        <taxon>Tracheophyta</taxon>
        <taxon>Spermatophyta</taxon>
        <taxon>Magnoliopsida</taxon>
        <taxon>Liliopsida</taxon>
        <taxon>Poales</taxon>
        <taxon>Poaceae</taxon>
        <taxon>BOP clade</taxon>
        <taxon>Oryzoideae</taxon>
        <taxon>Oryzeae</taxon>
        <taxon>Oryzinae</taxon>
        <taxon>Oryza</taxon>
        <taxon>Oryza sativa</taxon>
    </lineage>
</organism>
<keyword id="KW-0927">Auxin signaling pathway</keyword>
<keyword id="KW-0903">Direct protein sequencing</keyword>
<keyword id="KW-0238">DNA-binding</keyword>
<keyword id="KW-0539">Nucleus</keyword>
<keyword id="KW-1185">Reference proteome</keyword>
<keyword id="KW-0804">Transcription</keyword>
<keyword id="KW-0805">Transcription regulation</keyword>
<dbReference type="EMBL" id="AP004093">
    <property type="protein sequence ID" value="BAD25169.1"/>
    <property type="molecule type" value="Genomic_DNA"/>
</dbReference>
<dbReference type="EMBL" id="AP004863">
    <property type="protein sequence ID" value="BAD25545.1"/>
    <property type="molecule type" value="Genomic_DNA"/>
</dbReference>
<dbReference type="EMBL" id="AP008208">
    <property type="protein sequence ID" value="BAF07907.1"/>
    <property type="molecule type" value="Genomic_DNA"/>
</dbReference>
<dbReference type="EMBL" id="AP014958">
    <property type="protein sequence ID" value="BAS77143.1"/>
    <property type="molecule type" value="Genomic_DNA"/>
</dbReference>
<dbReference type="EMBL" id="CM000139">
    <property type="protein sequence ID" value="EAZ21860.1"/>
    <property type="molecule type" value="Genomic_DNA"/>
</dbReference>
<dbReference type="EMBL" id="AK070569">
    <property type="protein sequence ID" value="BAG92035.1"/>
    <property type="molecule type" value="mRNA"/>
</dbReference>
<dbReference type="EMBL" id="AB071294">
    <property type="protein sequence ID" value="BAB85914.1"/>
    <property type="molecule type" value="mRNA"/>
</dbReference>
<dbReference type="RefSeq" id="XP_015625706.1">
    <property type="nucleotide sequence ID" value="XM_015770220.1"/>
</dbReference>
<dbReference type="SMR" id="Q6H6V4"/>
<dbReference type="FunCoup" id="Q6H6V4">
    <property type="interactions" value="2158"/>
</dbReference>
<dbReference type="STRING" id="39947.Q6H6V4"/>
<dbReference type="PaxDb" id="39947-Q6H6V4"/>
<dbReference type="EnsemblPlants" id="Os02t0164900-01">
    <property type="protein sequence ID" value="Os02t0164900-01"/>
    <property type="gene ID" value="Os02g0164900"/>
</dbReference>
<dbReference type="EnsemblPlants" id="Os02t0164900-02">
    <property type="protein sequence ID" value="Os02t0164900-02"/>
    <property type="gene ID" value="Os02g0164900"/>
</dbReference>
<dbReference type="Gramene" id="Os02t0164900-01">
    <property type="protein sequence ID" value="Os02t0164900-01"/>
    <property type="gene ID" value="Os02g0164900"/>
</dbReference>
<dbReference type="Gramene" id="Os02t0164900-02">
    <property type="protein sequence ID" value="Os02t0164900-02"/>
    <property type="gene ID" value="Os02g0164900"/>
</dbReference>
<dbReference type="KEGG" id="dosa:Os02g0164900"/>
<dbReference type="eggNOG" id="ENOG502QSCZ">
    <property type="taxonomic scope" value="Eukaryota"/>
</dbReference>
<dbReference type="HOGENOM" id="CLU_002626_1_0_1"/>
<dbReference type="InParanoid" id="Q6H6V4"/>
<dbReference type="OMA" id="ESEYVPC"/>
<dbReference type="OrthoDB" id="2016915at2759"/>
<dbReference type="Proteomes" id="UP000000763">
    <property type="component" value="Chromosome 2"/>
</dbReference>
<dbReference type="Proteomes" id="UP000007752">
    <property type="component" value="Chromosome 2"/>
</dbReference>
<dbReference type="Proteomes" id="UP000059680">
    <property type="component" value="Chromosome 2"/>
</dbReference>
<dbReference type="GO" id="GO:0005634">
    <property type="term" value="C:nucleus"/>
    <property type="evidence" value="ECO:0007669"/>
    <property type="project" value="UniProtKB-SubCell"/>
</dbReference>
<dbReference type="GO" id="GO:0003677">
    <property type="term" value="F:DNA binding"/>
    <property type="evidence" value="ECO:0007669"/>
    <property type="project" value="UniProtKB-KW"/>
</dbReference>
<dbReference type="GO" id="GO:0009734">
    <property type="term" value="P:auxin-activated signaling pathway"/>
    <property type="evidence" value="ECO:0007669"/>
    <property type="project" value="UniProtKB-KW"/>
</dbReference>
<dbReference type="GO" id="GO:0006355">
    <property type="term" value="P:regulation of DNA-templated transcription"/>
    <property type="evidence" value="ECO:0007669"/>
    <property type="project" value="InterPro"/>
</dbReference>
<dbReference type="CDD" id="cd10017">
    <property type="entry name" value="B3_DNA"/>
    <property type="match status" value="1"/>
</dbReference>
<dbReference type="FunFam" id="2.30.30.1040:FF:000001">
    <property type="entry name" value="Auxin response factor"/>
    <property type="match status" value="1"/>
</dbReference>
<dbReference type="FunFam" id="2.40.330.10:FF:000001">
    <property type="entry name" value="Auxin response factor"/>
    <property type="match status" value="1"/>
</dbReference>
<dbReference type="FunFam" id="3.10.20.90:FF:000047">
    <property type="entry name" value="Auxin response factor"/>
    <property type="match status" value="1"/>
</dbReference>
<dbReference type="Gene3D" id="2.30.30.1040">
    <property type="match status" value="1"/>
</dbReference>
<dbReference type="Gene3D" id="2.40.330.10">
    <property type="entry name" value="DNA-binding pseudobarrel domain"/>
    <property type="match status" value="1"/>
</dbReference>
<dbReference type="Gene3D" id="3.10.20.90">
    <property type="entry name" value="Phosphatidylinositol 3-kinase Catalytic Subunit, Chain A, domain 1"/>
    <property type="match status" value="1"/>
</dbReference>
<dbReference type="InterPro" id="IPR010525">
    <property type="entry name" value="ARF_dom"/>
</dbReference>
<dbReference type="InterPro" id="IPR044835">
    <property type="entry name" value="ARF_plant"/>
</dbReference>
<dbReference type="InterPro" id="IPR033389">
    <property type="entry name" value="AUX/IAA_dom"/>
</dbReference>
<dbReference type="InterPro" id="IPR003340">
    <property type="entry name" value="B3_DNA-bd"/>
</dbReference>
<dbReference type="InterPro" id="IPR015300">
    <property type="entry name" value="DNA-bd_pseudobarrel_sf"/>
</dbReference>
<dbReference type="InterPro" id="IPR053793">
    <property type="entry name" value="PB1-like"/>
</dbReference>
<dbReference type="PANTHER" id="PTHR31384">
    <property type="entry name" value="AUXIN RESPONSE FACTOR 4-RELATED"/>
    <property type="match status" value="1"/>
</dbReference>
<dbReference type="PANTHER" id="PTHR31384:SF115">
    <property type="entry name" value="AUXIN RESPONSE FACTOR 6"/>
    <property type="match status" value="1"/>
</dbReference>
<dbReference type="Pfam" id="PF06507">
    <property type="entry name" value="ARF_AD"/>
    <property type="match status" value="1"/>
</dbReference>
<dbReference type="Pfam" id="PF02309">
    <property type="entry name" value="AUX_IAA"/>
    <property type="match status" value="1"/>
</dbReference>
<dbReference type="Pfam" id="PF02362">
    <property type="entry name" value="B3"/>
    <property type="match status" value="1"/>
</dbReference>
<dbReference type="SMART" id="SM01019">
    <property type="entry name" value="B3"/>
    <property type="match status" value="1"/>
</dbReference>
<dbReference type="SUPFAM" id="SSF54277">
    <property type="entry name" value="CAD &amp; PB1 domains"/>
    <property type="match status" value="1"/>
</dbReference>
<dbReference type="SUPFAM" id="SSF101936">
    <property type="entry name" value="DNA-binding pseudobarrel domain"/>
    <property type="match status" value="1"/>
</dbReference>
<dbReference type="PROSITE" id="PS50863">
    <property type="entry name" value="B3"/>
    <property type="match status" value="1"/>
</dbReference>
<dbReference type="PROSITE" id="PS51745">
    <property type="entry name" value="PB1"/>
    <property type="match status" value="1"/>
</dbReference>